<feature type="chain" id="PRO_1000215580" description="Proline--tRNA ligase">
    <location>
        <begin position="1"/>
        <end position="481"/>
    </location>
</feature>
<keyword id="KW-0030">Aminoacyl-tRNA synthetase</keyword>
<keyword id="KW-0067">ATP-binding</keyword>
<keyword id="KW-0963">Cytoplasm</keyword>
<keyword id="KW-0436">Ligase</keyword>
<keyword id="KW-0547">Nucleotide-binding</keyword>
<keyword id="KW-0648">Protein biosynthesis</keyword>
<comment type="function">
    <text evidence="1">Catalyzes the attachment of proline to tRNA(Pro) in a two-step reaction: proline is first activated by ATP to form Pro-AMP and then transferred to the acceptor end of tRNA(Pro).</text>
</comment>
<comment type="catalytic activity">
    <reaction evidence="1">
        <text>tRNA(Pro) + L-proline + ATP = L-prolyl-tRNA(Pro) + AMP + diphosphate</text>
        <dbReference type="Rhea" id="RHEA:14305"/>
        <dbReference type="Rhea" id="RHEA-COMP:9700"/>
        <dbReference type="Rhea" id="RHEA-COMP:9702"/>
        <dbReference type="ChEBI" id="CHEBI:30616"/>
        <dbReference type="ChEBI" id="CHEBI:33019"/>
        <dbReference type="ChEBI" id="CHEBI:60039"/>
        <dbReference type="ChEBI" id="CHEBI:78442"/>
        <dbReference type="ChEBI" id="CHEBI:78532"/>
        <dbReference type="ChEBI" id="CHEBI:456215"/>
        <dbReference type="EC" id="6.1.1.15"/>
    </reaction>
</comment>
<comment type="subunit">
    <text evidence="1">Homodimer.</text>
</comment>
<comment type="subcellular location">
    <subcellularLocation>
        <location evidence="1">Cytoplasm</location>
    </subcellularLocation>
</comment>
<comment type="domain">
    <text evidence="1">Consists of three domains: the N-terminal catalytic domain, the anticodon-binding domain and the C-terminal extension.</text>
</comment>
<comment type="similarity">
    <text evidence="1">Belongs to the class-II aminoacyl-tRNA synthetase family. ProS type 3 subfamily.</text>
</comment>
<evidence type="ECO:0000255" key="1">
    <source>
        <dbReference type="HAMAP-Rule" id="MF_01571"/>
    </source>
</evidence>
<protein>
    <recommendedName>
        <fullName evidence="1">Proline--tRNA ligase</fullName>
        <ecNumber evidence="1">6.1.1.15</ecNumber>
    </recommendedName>
    <alternativeName>
        <fullName evidence="1">Prolyl-tRNA synthetase</fullName>
        <shortName evidence="1">ProRS</shortName>
    </alternativeName>
</protein>
<sequence>MQITRDKWSKNFSEWFDWVLREGEFYDYGRYPVKGMGVWMPYGFKLRQNIISIIRNLLDSTGHEEVLFPLLIPEDLLRRESTHIKGFEEEVFWVTKGGSEDLDVKLALRPTSEVAITTMENLWLKSYKQLPKKYYQIVSVFRYETKATRPMIRLREITTFKEAHTVHETYDDAQRQVEEAIEIYKKIFNNLAIPYVLSERPEWDRFAGALHTYAFDTIMPDGKVMQIGTVHHLGQNFSRALDFKIQKKDGSLDYPHQTSYGISDRAIASVIAIHGDDHGPILPPSVAPIKVVVVPIPAKNEEGTQQVMKYSIEICEMLNKNNITCVTDQDTEKTPGEKFYIWEIKGVPIRLEIGPRELASSTVFIKRRDNLKSYTVKKEEVVNKVKEVLNEIQEDLRKRAWESLKSRIEYANDIEKAKNILENNSGIVDVPWCGSKECGLKIEELTNARVLGYPIEDRKVNDKCVICKMNAKTVLRVAKTY</sequence>
<accession>C3NET8</accession>
<gene>
    <name evidence="1" type="primary">proS</name>
    <name type="ordered locus">YG5714_1565</name>
</gene>
<dbReference type="EC" id="6.1.1.15" evidence="1"/>
<dbReference type="EMBL" id="CP001403">
    <property type="protein sequence ID" value="ACP45827.1"/>
    <property type="molecule type" value="Genomic_DNA"/>
</dbReference>
<dbReference type="RefSeq" id="WP_012713818.1">
    <property type="nucleotide sequence ID" value="NC_012622.1"/>
</dbReference>
<dbReference type="SMR" id="C3NET8"/>
<dbReference type="GeneID" id="7810930"/>
<dbReference type="KEGG" id="siy:YG5714_1565"/>
<dbReference type="HOGENOM" id="CLU_001882_4_2_2"/>
<dbReference type="Proteomes" id="UP000002308">
    <property type="component" value="Chromosome"/>
</dbReference>
<dbReference type="GO" id="GO:0017101">
    <property type="term" value="C:aminoacyl-tRNA synthetase multienzyme complex"/>
    <property type="evidence" value="ECO:0007669"/>
    <property type="project" value="TreeGrafter"/>
</dbReference>
<dbReference type="GO" id="GO:0005737">
    <property type="term" value="C:cytoplasm"/>
    <property type="evidence" value="ECO:0007669"/>
    <property type="project" value="UniProtKB-SubCell"/>
</dbReference>
<dbReference type="GO" id="GO:0005524">
    <property type="term" value="F:ATP binding"/>
    <property type="evidence" value="ECO:0007669"/>
    <property type="project" value="UniProtKB-UniRule"/>
</dbReference>
<dbReference type="GO" id="GO:0004827">
    <property type="term" value="F:proline-tRNA ligase activity"/>
    <property type="evidence" value="ECO:0007669"/>
    <property type="project" value="UniProtKB-UniRule"/>
</dbReference>
<dbReference type="GO" id="GO:0006433">
    <property type="term" value="P:prolyl-tRNA aminoacylation"/>
    <property type="evidence" value="ECO:0007669"/>
    <property type="project" value="UniProtKB-UniRule"/>
</dbReference>
<dbReference type="CDD" id="cd00862">
    <property type="entry name" value="ProRS_anticodon_zinc"/>
    <property type="match status" value="1"/>
</dbReference>
<dbReference type="CDD" id="cd00778">
    <property type="entry name" value="ProRS_core_arch_euk"/>
    <property type="match status" value="1"/>
</dbReference>
<dbReference type="FunFam" id="3.40.50.800:FF:000005">
    <property type="entry name" value="bifunctional glutamate/proline--tRNA ligase"/>
    <property type="match status" value="1"/>
</dbReference>
<dbReference type="FunFam" id="3.30.930.10:FF:000037">
    <property type="entry name" value="Proline--tRNA ligase"/>
    <property type="match status" value="1"/>
</dbReference>
<dbReference type="Gene3D" id="3.40.50.800">
    <property type="entry name" value="Anticodon-binding domain"/>
    <property type="match status" value="1"/>
</dbReference>
<dbReference type="Gene3D" id="3.30.930.10">
    <property type="entry name" value="Bira Bifunctional Protein, Domain 2"/>
    <property type="match status" value="1"/>
</dbReference>
<dbReference type="Gene3D" id="3.30.110.30">
    <property type="entry name" value="C-terminal domain of ProRS"/>
    <property type="match status" value="1"/>
</dbReference>
<dbReference type="HAMAP" id="MF_01571">
    <property type="entry name" value="Pro_tRNA_synth_type3"/>
    <property type="match status" value="1"/>
</dbReference>
<dbReference type="InterPro" id="IPR002314">
    <property type="entry name" value="aa-tRNA-synt_IIb"/>
</dbReference>
<dbReference type="InterPro" id="IPR006195">
    <property type="entry name" value="aa-tRNA-synth_II"/>
</dbReference>
<dbReference type="InterPro" id="IPR045864">
    <property type="entry name" value="aa-tRNA-synth_II/BPL/LPL"/>
</dbReference>
<dbReference type="InterPro" id="IPR004154">
    <property type="entry name" value="Anticodon-bd"/>
</dbReference>
<dbReference type="InterPro" id="IPR036621">
    <property type="entry name" value="Anticodon-bd_dom_sf"/>
</dbReference>
<dbReference type="InterPro" id="IPR002316">
    <property type="entry name" value="Pro-tRNA-ligase_IIa"/>
</dbReference>
<dbReference type="InterPro" id="IPR004499">
    <property type="entry name" value="Pro-tRNA-ligase_IIa_arc-type"/>
</dbReference>
<dbReference type="InterPro" id="IPR016061">
    <property type="entry name" value="Pro-tRNA_ligase_II_C"/>
</dbReference>
<dbReference type="InterPro" id="IPR017449">
    <property type="entry name" value="Pro-tRNA_synth_II"/>
</dbReference>
<dbReference type="InterPro" id="IPR033721">
    <property type="entry name" value="ProRS_core_arch_euk"/>
</dbReference>
<dbReference type="NCBIfam" id="TIGR00408">
    <property type="entry name" value="proS_fam_I"/>
    <property type="match status" value="1"/>
</dbReference>
<dbReference type="PANTHER" id="PTHR43382:SF2">
    <property type="entry name" value="BIFUNCTIONAL GLUTAMATE_PROLINE--TRNA LIGASE"/>
    <property type="match status" value="1"/>
</dbReference>
<dbReference type="PANTHER" id="PTHR43382">
    <property type="entry name" value="PROLYL-TRNA SYNTHETASE"/>
    <property type="match status" value="1"/>
</dbReference>
<dbReference type="Pfam" id="PF03129">
    <property type="entry name" value="HGTP_anticodon"/>
    <property type="match status" value="1"/>
</dbReference>
<dbReference type="Pfam" id="PF09180">
    <property type="entry name" value="ProRS-C_1"/>
    <property type="match status" value="1"/>
</dbReference>
<dbReference type="Pfam" id="PF00587">
    <property type="entry name" value="tRNA-synt_2b"/>
    <property type="match status" value="1"/>
</dbReference>
<dbReference type="PRINTS" id="PR01046">
    <property type="entry name" value="TRNASYNTHPRO"/>
</dbReference>
<dbReference type="SMART" id="SM00946">
    <property type="entry name" value="ProRS-C_1"/>
    <property type="match status" value="1"/>
</dbReference>
<dbReference type="SUPFAM" id="SSF64586">
    <property type="entry name" value="C-terminal domain of ProRS"/>
    <property type="match status" value="1"/>
</dbReference>
<dbReference type="SUPFAM" id="SSF52954">
    <property type="entry name" value="Class II aaRS ABD-related"/>
    <property type="match status" value="1"/>
</dbReference>
<dbReference type="SUPFAM" id="SSF55681">
    <property type="entry name" value="Class II aaRS and biotin synthetases"/>
    <property type="match status" value="1"/>
</dbReference>
<dbReference type="PROSITE" id="PS50862">
    <property type="entry name" value="AA_TRNA_LIGASE_II"/>
    <property type="match status" value="1"/>
</dbReference>
<name>SYP_SACI7</name>
<organism>
    <name type="scientific">Saccharolobus islandicus (strain Y.G.57.14 / Yellowstone #1)</name>
    <name type="common">Sulfolobus islandicus</name>
    <dbReference type="NCBI Taxonomy" id="439386"/>
    <lineage>
        <taxon>Archaea</taxon>
        <taxon>Thermoproteota</taxon>
        <taxon>Thermoprotei</taxon>
        <taxon>Sulfolobales</taxon>
        <taxon>Sulfolobaceae</taxon>
        <taxon>Saccharolobus</taxon>
    </lineage>
</organism>
<proteinExistence type="inferred from homology"/>
<reference key="1">
    <citation type="journal article" date="2009" name="Proc. Natl. Acad. Sci. U.S.A.">
        <title>Biogeography of the Sulfolobus islandicus pan-genome.</title>
        <authorList>
            <person name="Reno M.L."/>
            <person name="Held N.L."/>
            <person name="Fields C.J."/>
            <person name="Burke P.V."/>
            <person name="Whitaker R.J."/>
        </authorList>
    </citation>
    <scope>NUCLEOTIDE SEQUENCE [LARGE SCALE GENOMIC DNA]</scope>
    <source>
        <strain>Y.G.57.14 / Yellowstone #1</strain>
    </source>
</reference>